<proteinExistence type="inferred from homology"/>
<keyword id="KW-0067">ATP-binding</keyword>
<keyword id="KW-0238">DNA-binding</keyword>
<keyword id="KW-0479">Metal-binding</keyword>
<keyword id="KW-0547">Nucleotide-binding</keyword>
<keyword id="KW-0678">Repressor</keyword>
<keyword id="KW-0804">Transcription</keyword>
<keyword id="KW-0805">Transcription regulation</keyword>
<keyword id="KW-0862">Zinc</keyword>
<keyword id="KW-0863">Zinc-finger</keyword>
<evidence type="ECO:0000255" key="1">
    <source>
        <dbReference type="HAMAP-Rule" id="MF_00440"/>
    </source>
</evidence>
<name>NRDR_POLNS</name>
<gene>
    <name evidence="1" type="primary">nrdR</name>
    <name type="ordered locus">Pnec_0308</name>
</gene>
<feature type="chain" id="PRO_1000124530" description="Transcriptional repressor NrdR">
    <location>
        <begin position="1"/>
        <end position="148"/>
    </location>
</feature>
<feature type="domain" description="ATP-cone" evidence="1">
    <location>
        <begin position="49"/>
        <end position="139"/>
    </location>
</feature>
<feature type="zinc finger region" evidence="1">
    <location>
        <begin position="3"/>
        <end position="34"/>
    </location>
</feature>
<organism>
    <name type="scientific">Polynucleobacter necessarius subsp. necessarius (strain STIR1)</name>
    <dbReference type="NCBI Taxonomy" id="452638"/>
    <lineage>
        <taxon>Bacteria</taxon>
        <taxon>Pseudomonadati</taxon>
        <taxon>Pseudomonadota</taxon>
        <taxon>Betaproteobacteria</taxon>
        <taxon>Burkholderiales</taxon>
        <taxon>Burkholderiaceae</taxon>
        <taxon>Polynucleobacter</taxon>
    </lineage>
</organism>
<sequence>MRCPFCHNEDTQVLDTRVSDEGDTIRRRRRCAKCDKRFTTYERVELALPAIVKKNGSRVEYSHDKLASSIKLALRKRSVSSDSVDESIARIEEKLLSFGEKEIPSERVGELVMRELKRLDKVAYIRFASVYRSFADIESFESALKELK</sequence>
<dbReference type="EMBL" id="CP001010">
    <property type="protein sequence ID" value="ACB43601.1"/>
    <property type="molecule type" value="Genomic_DNA"/>
</dbReference>
<dbReference type="SMR" id="B1XTC4"/>
<dbReference type="STRING" id="452638.Pnec_0308"/>
<dbReference type="KEGG" id="pne:Pnec_0308"/>
<dbReference type="eggNOG" id="COG1327">
    <property type="taxonomic scope" value="Bacteria"/>
</dbReference>
<dbReference type="HOGENOM" id="CLU_108412_0_1_4"/>
<dbReference type="OrthoDB" id="9807461at2"/>
<dbReference type="GO" id="GO:0005524">
    <property type="term" value="F:ATP binding"/>
    <property type="evidence" value="ECO:0007669"/>
    <property type="project" value="UniProtKB-KW"/>
</dbReference>
<dbReference type="GO" id="GO:0003677">
    <property type="term" value="F:DNA binding"/>
    <property type="evidence" value="ECO:0007669"/>
    <property type="project" value="UniProtKB-KW"/>
</dbReference>
<dbReference type="GO" id="GO:0008270">
    <property type="term" value="F:zinc ion binding"/>
    <property type="evidence" value="ECO:0007669"/>
    <property type="project" value="UniProtKB-UniRule"/>
</dbReference>
<dbReference type="GO" id="GO:0045892">
    <property type="term" value="P:negative regulation of DNA-templated transcription"/>
    <property type="evidence" value="ECO:0007669"/>
    <property type="project" value="UniProtKB-UniRule"/>
</dbReference>
<dbReference type="HAMAP" id="MF_00440">
    <property type="entry name" value="NrdR"/>
    <property type="match status" value="1"/>
</dbReference>
<dbReference type="InterPro" id="IPR005144">
    <property type="entry name" value="ATP-cone_dom"/>
</dbReference>
<dbReference type="InterPro" id="IPR055173">
    <property type="entry name" value="NrdR-like_N"/>
</dbReference>
<dbReference type="InterPro" id="IPR003796">
    <property type="entry name" value="RNR_NrdR-like"/>
</dbReference>
<dbReference type="NCBIfam" id="TIGR00244">
    <property type="entry name" value="transcriptional regulator NrdR"/>
    <property type="match status" value="1"/>
</dbReference>
<dbReference type="PANTHER" id="PTHR30455">
    <property type="entry name" value="TRANSCRIPTIONAL REPRESSOR NRDR"/>
    <property type="match status" value="1"/>
</dbReference>
<dbReference type="PANTHER" id="PTHR30455:SF2">
    <property type="entry name" value="TRANSCRIPTIONAL REPRESSOR NRDR"/>
    <property type="match status" value="1"/>
</dbReference>
<dbReference type="Pfam" id="PF03477">
    <property type="entry name" value="ATP-cone"/>
    <property type="match status" value="1"/>
</dbReference>
<dbReference type="Pfam" id="PF22811">
    <property type="entry name" value="Zn_ribbon_NrdR"/>
    <property type="match status" value="1"/>
</dbReference>
<dbReference type="PROSITE" id="PS51161">
    <property type="entry name" value="ATP_CONE"/>
    <property type="match status" value="1"/>
</dbReference>
<accession>B1XTC4</accession>
<comment type="function">
    <text evidence="1">Negatively regulates transcription of bacterial ribonucleotide reductase nrd genes and operons by binding to NrdR-boxes.</text>
</comment>
<comment type="cofactor">
    <cofactor evidence="1">
        <name>Zn(2+)</name>
        <dbReference type="ChEBI" id="CHEBI:29105"/>
    </cofactor>
    <text evidence="1">Binds 1 zinc ion.</text>
</comment>
<comment type="similarity">
    <text evidence="1">Belongs to the NrdR family.</text>
</comment>
<reference key="1">
    <citation type="journal article" date="2013" name="Proc. Natl. Acad. Sci. U.S.A.">
        <title>Polynucleobacter necessarius, a model for genome reduction in both free-living and symbiotic bacteria.</title>
        <authorList>
            <person name="Boscaro V."/>
            <person name="Felletti M."/>
            <person name="Vannini C."/>
            <person name="Ackerman M.S."/>
            <person name="Chain P.S."/>
            <person name="Malfatti S."/>
            <person name="Vergez L.M."/>
            <person name="Shin M."/>
            <person name="Doak T.G."/>
            <person name="Lynch M."/>
            <person name="Petroni G."/>
        </authorList>
    </citation>
    <scope>NUCLEOTIDE SEQUENCE [LARGE SCALE GENOMIC DNA]</scope>
    <source>
        <strain>STIR1</strain>
    </source>
</reference>
<protein>
    <recommendedName>
        <fullName evidence="1">Transcriptional repressor NrdR</fullName>
    </recommendedName>
</protein>